<protein>
    <recommendedName>
        <fullName>P3N-PIPO polyprotein</fullName>
    </recommendedName>
    <component>
        <recommendedName>
            <fullName>P1 protease</fullName>
            <ecNumber>3.4.21.-</ecNumber>
        </recommendedName>
        <alternativeName>
            <fullName>N-terminal protein</fullName>
        </alternativeName>
        <alternativeName>
            <fullName>P1 proteinase</fullName>
        </alternativeName>
    </component>
    <component>
        <recommendedName>
            <fullName>Helper component proteinase</fullName>
            <shortName>HC-pro</shortName>
            <ecNumber>3.4.22.45</ecNumber>
        </recommendedName>
    </component>
    <component>
        <recommendedName>
            <fullName>Movement protein P3N-PIPO</fullName>
        </recommendedName>
        <alternativeName>
            <fullName>Pretty interesting potyviridae ORF</fullName>
            <shortName>PIPO</shortName>
        </alternativeName>
    </component>
</protein>
<feature type="chain" id="PRO_0000420078" description="P3N-PIPO polyprotein">
    <location>
        <begin position="1"/>
        <end position="1026"/>
    </location>
</feature>
<feature type="chain" id="PRO_0000420079" description="P1 protease" evidence="4">
    <location>
        <begin position="1"/>
        <end position="308"/>
    </location>
</feature>
<feature type="chain" id="PRO_0000420080" description="Helper component proteinase" evidence="4">
    <location>
        <begin position="309"/>
        <end position="766"/>
    </location>
</feature>
<feature type="chain" id="PRO_0000408548" description="Movement protein P3N-PIPO">
    <location>
        <begin position="767"/>
        <end position="1026"/>
    </location>
</feature>
<feature type="domain" description="Peptidase S30" evidence="6">
    <location>
        <begin position="165"/>
        <end position="308"/>
    </location>
</feature>
<feature type="domain" description="Peptidase C6" evidence="5">
    <location>
        <begin position="644"/>
        <end position="766"/>
    </location>
</feature>
<feature type="short sequence motif" description="Involved in interaction with stylet and aphid transmission" evidence="1">
    <location>
        <begin position="360"/>
        <end position="363"/>
    </location>
</feature>
<feature type="short sequence motif" description="Involved in virions binding and aphid transmission" evidence="1">
    <location>
        <begin position="618"/>
        <end position="620"/>
    </location>
</feature>
<feature type="active site" description="For P1 proteinase activity" evidence="6">
    <location>
        <position position="216"/>
    </location>
</feature>
<feature type="active site" description="For P1 proteinase activity" evidence="6">
    <location>
        <position position="225"/>
    </location>
</feature>
<feature type="active site" description="For P1 proteinase activity" evidence="6">
    <location>
        <position position="259"/>
    </location>
</feature>
<feature type="active site" description="For helper component proteinase activity" evidence="5">
    <location>
        <position position="652"/>
    </location>
</feature>
<feature type="active site" description="For helper component proteinase activity" evidence="5">
    <location>
        <position position="725"/>
    </location>
</feature>
<feature type="site" description="Cleavage; by P1 proteinase" evidence="6">
    <location>
        <begin position="308"/>
        <end position="309"/>
    </location>
</feature>
<feature type="site" description="Cleavage; by autolysis" evidence="5">
    <location>
        <begin position="766"/>
        <end position="767"/>
    </location>
</feature>
<feature type="unsure residue">
    <location>
        <begin position="920"/>
        <end position="926"/>
    </location>
</feature>
<keyword id="KW-1031">Host cell junction</keyword>
<keyword id="KW-0945">Host-virus interaction</keyword>
<keyword id="KW-0378">Hydrolase</keyword>
<keyword id="KW-1090">Inhibition of host innate immune response by virus</keyword>
<keyword id="KW-0645">Protease</keyword>
<keyword id="KW-0688">Ribosomal frameshifting</keyword>
<keyword id="KW-0720">Serine protease</keyword>
<keyword id="KW-0941">Suppressor of RNA silencing</keyword>
<keyword id="KW-0813">Transport</keyword>
<keyword id="KW-0899">Viral immunoevasion</keyword>
<keyword id="KW-0916">Viral movement protein</keyword>
<dbReference type="EC" id="3.4.21.-"/>
<dbReference type="EC" id="3.4.22.45"/>
<dbReference type="EMBL" id="M92280">
    <property type="status" value="NOT_ANNOTATED_CDS"/>
    <property type="molecule type" value="Genomic_RNA"/>
</dbReference>
<dbReference type="SMR" id="P0CK04"/>
<dbReference type="Proteomes" id="UP000007637">
    <property type="component" value="Genome"/>
</dbReference>
<dbReference type="GO" id="GO:0044219">
    <property type="term" value="C:host cell plasmodesma"/>
    <property type="evidence" value="ECO:0007669"/>
    <property type="project" value="UniProtKB-SubCell"/>
</dbReference>
<dbReference type="GO" id="GO:0004197">
    <property type="term" value="F:cysteine-type endopeptidase activity"/>
    <property type="evidence" value="ECO:0007669"/>
    <property type="project" value="InterPro"/>
</dbReference>
<dbReference type="GO" id="GO:0008236">
    <property type="term" value="F:serine-type peptidase activity"/>
    <property type="evidence" value="ECO:0007669"/>
    <property type="project" value="UniProtKB-KW"/>
</dbReference>
<dbReference type="GO" id="GO:0006508">
    <property type="term" value="P:proteolysis"/>
    <property type="evidence" value="ECO:0007669"/>
    <property type="project" value="UniProtKB-KW"/>
</dbReference>
<dbReference type="GO" id="GO:0052170">
    <property type="term" value="P:symbiont-mediated suppression of host innate immune response"/>
    <property type="evidence" value="ECO:0007669"/>
    <property type="project" value="UniProtKB-KW"/>
</dbReference>
<dbReference type="GO" id="GO:0046740">
    <property type="term" value="P:transport of virus in host, cell to cell"/>
    <property type="evidence" value="ECO:0007669"/>
    <property type="project" value="UniProtKB-KW"/>
</dbReference>
<dbReference type="GO" id="GO:0075523">
    <property type="term" value="P:viral translational frameshifting"/>
    <property type="evidence" value="ECO:0007669"/>
    <property type="project" value="UniProtKB-KW"/>
</dbReference>
<dbReference type="Gene3D" id="3.90.70.150">
    <property type="entry name" value="Helper component proteinase"/>
    <property type="match status" value="1"/>
</dbReference>
<dbReference type="InterPro" id="IPR001456">
    <property type="entry name" value="HC-pro"/>
</dbReference>
<dbReference type="InterPro" id="IPR031159">
    <property type="entry name" value="HC_PRO_CPD_dom"/>
</dbReference>
<dbReference type="InterPro" id="IPR042308">
    <property type="entry name" value="HC_PRO_CPD_sf"/>
</dbReference>
<dbReference type="InterPro" id="IPR002540">
    <property type="entry name" value="Pept_S30_P1_potyvir"/>
</dbReference>
<dbReference type="InterPro" id="IPR039560">
    <property type="entry name" value="Potyvirid-P3"/>
</dbReference>
<dbReference type="Pfam" id="PF00851">
    <property type="entry name" value="Peptidase_C6"/>
    <property type="match status" value="1"/>
</dbReference>
<dbReference type="Pfam" id="PF01577">
    <property type="entry name" value="Peptidase_S30"/>
    <property type="match status" value="1"/>
</dbReference>
<dbReference type="Pfam" id="PF13608">
    <property type="entry name" value="Potyvirid-P3"/>
    <property type="match status" value="1"/>
</dbReference>
<dbReference type="PROSITE" id="PS51744">
    <property type="entry name" value="HC_PRO_CPD"/>
    <property type="match status" value="1"/>
</dbReference>
<dbReference type="PROSITE" id="PS51871">
    <property type="entry name" value="PV_P1_PRO"/>
    <property type="match status" value="1"/>
</dbReference>
<organismHost>
    <name type="scientific">Prunus armeniaca</name>
    <name type="common">Apricot</name>
    <name type="synonym">Armeniaca vulgaris</name>
    <dbReference type="NCBI Taxonomy" id="36596"/>
</organismHost>
<organismHost>
    <name type="scientific">Prunus cerasifera</name>
    <name type="common">cherry plum</name>
    <dbReference type="NCBI Taxonomy" id="36595"/>
</organismHost>
<organismHost>
    <name type="scientific">Prunus domestica</name>
    <name type="common">Garden plum</name>
    <dbReference type="NCBI Taxonomy" id="3758"/>
</organismHost>
<organismHost>
    <name type="scientific">Prunus glandulosa</name>
    <dbReference type="NCBI Taxonomy" id="105665"/>
</organismHost>
<organismHost>
    <name type="scientific">Prunus persica</name>
    <name type="common">Peach</name>
    <name type="synonym">Amygdalus persica</name>
    <dbReference type="NCBI Taxonomy" id="3760"/>
</organismHost>
<organismHost>
    <name type="scientific">Prunus salicina</name>
    <dbReference type="NCBI Taxonomy" id="88123"/>
</organismHost>
<organismHost>
    <name type="scientific">Prunus spinosa</name>
    <name type="common">Blackthorn</name>
    <name type="synonym">Prunus domestica var. spinosa</name>
    <dbReference type="NCBI Taxonomy" id="114937"/>
</organismHost>
<organism>
    <name type="scientific">Plum pox potyvirus (strain SK 68)</name>
    <name type="common">PPV</name>
    <dbReference type="NCBI Taxonomy" id="103927"/>
    <lineage>
        <taxon>Viruses</taxon>
        <taxon>Riboviria</taxon>
        <taxon>Orthornavirae</taxon>
        <taxon>Pisuviricota</taxon>
        <taxon>Stelpaviricetes</taxon>
        <taxon>Patatavirales</taxon>
        <taxon>Potyviridae</taxon>
        <taxon>Potyvirus</taxon>
        <taxon>Potyvirus plumpoxi</taxon>
        <taxon>Plum pox virus</taxon>
    </lineage>
</organism>
<sequence>MSTIVFGSFTCHLDAAIHQDNADRLAKAWTRPENRQVSNVHLLCRRAAKSLINTYESATASAWKGLEEKLQPMFAKREFSKTVTKRKGLRCFKESSEKFIEKKLKKQYKEERERFQFLNGPDAIVNQISVDKCEASVWVPFPHIIEKPSFTTPSMKKKVVFTKVRMSEASLQLFMRRVAANAKANGQKVEIIGRKRVVGHYTTKSRLTYFRTHVRHLDGSKPRYDLVLDEATKKILQLFANTSGFHHVHKKGEITPGMSGFVVNPMNLSDPMHVYDTDLFIVRGKHNSILVDSRCKVSKEQSNEIVHYSDPGKQFWDGFTNSFMQCKLRETDHQCTSDLDVKECGYVAALVCQAIIPCGKITCLQCAQKYSYMSQQEIRDRFSTVIEQHEKTVMDNYPQFSHVLAFLKRYRELMRVENQNYEAFKDITHMIGERKEAPFSHLNKINELIIKGGMMSAQDYIEASDHLRELARYQKNRTENIRSGSIKAFRNKISSKAHVNMQLMCDNQLDTNGNFVWGQREYHAKRFFRNYFDVIDVSEGYRRHIVRENPRGIRKLAIGNLVMSTNLAALRKQLLGEECIHFEVSKECTSKRGENFVYQCCCVTHEDGTPLESEIISPTKNHLVVGNSGDSKYVDLPTAKGGAMFIAKAGYCYINIFLAMLININEDEAKSFTKTVRDTIVPKLGTWPSMMDLATACHFLAVLYPETRNAELPRILVDHEAKIFHVVDSFGSLSTGMHVLKANTINQLISFASDTLDSSMKTYLVGGLEVDKCDEFKNVKLLIRSIYKPQIMEQVLKEEPYLLLMSVLSPGVLMALFNSGSLEKATQYWIARSHSLAAITAMLSALAAKVSLASTLNAQMSVIDEHAAVLCDSVFVGTKPYASYMMAVKTLERMKARTESDHTLNDLGFSVLRQATPHLVEKKLSPGVGAGLERIKLVGKVLCNLGIAAVAKTYTKTFHPERRSRFRRQVRHLRSVITWQPIQTPERRSSAEKRRRCLLHTPVDGKAILQSYRNFHKFSSKHSEDV</sequence>
<reference key="1">
    <citation type="journal article" date="1993" name="Virus Genes">
        <title>Comparative sequence analysis of four complete primary structures of plum pox virus strains.</title>
        <authorList>
            <person name="Palkovics L."/>
            <person name="Burgyan J."/>
            <person name="Balazs E."/>
        </authorList>
    </citation>
    <scope>NUCLEOTIDE SEQUENCE [GENOMIC RNA]</scope>
</reference>
<evidence type="ECO:0000250" key="1"/>
<evidence type="ECO:0000250" key="2">
    <source>
        <dbReference type="UniProtKB" id="P04517"/>
    </source>
</evidence>
<evidence type="ECO:0000250" key="3">
    <source>
        <dbReference type="UniProtKB" id="P0CK11"/>
    </source>
</evidence>
<evidence type="ECO:0000255" key="4"/>
<evidence type="ECO:0000255" key="5">
    <source>
        <dbReference type="PROSITE-ProRule" id="PRU01080"/>
    </source>
</evidence>
<evidence type="ECO:0000255" key="6">
    <source>
        <dbReference type="PROSITE-ProRule" id="PRU01219"/>
    </source>
</evidence>
<evidence type="ECO:0000305" key="7"/>
<comment type="function">
    <molecule>Helper component proteinase</molecule>
    <text evidence="2">Required for aphid transmission and also has proteolytic activity. Only cleaves a Gly-Gly dipeptide at its own C-terminus. Interacts with virions and aphid stylets. Acts as a suppressor of RNA-mediated gene silencing, also known as post-transcriptional gene silencing (PTGS), a mechanism of plant viral defense that limits the accumulation of viral RNAs. May have RNA-binding activity.</text>
</comment>
<comment type="function">
    <molecule>Movement protein P3N-PIPO</molecule>
    <text evidence="3">Allows efficient cell to cell propagation, by bypassing the host cell wall barrier. Transports viral genome to neighboring plant cells directly through plasmosdesmata, without any budding.</text>
</comment>
<comment type="catalytic activity">
    <molecule>Helper component proteinase</molecule>
    <reaction>
        <text>Hydrolyzes a Gly-|-Gly bond at its own C-terminus, commonly in the sequence -Tyr-Xaa-Val-Gly-|-Gly, in the processing of the potyviral polyprotein.</text>
        <dbReference type="EC" id="3.4.22.45"/>
    </reaction>
</comment>
<comment type="subunit">
    <molecule>Movement protein P3N-PIPO</molecule>
    <text evidence="3">Interacts (via PIPO domain) with host PCaP1 protein; this interaction may help to anchor the movement complex to the plasma membrane from which the complex could move to the plasmodesmata.</text>
</comment>
<comment type="subcellular location">
    <molecule>Movement protein P3N-PIPO</molecule>
    <subcellularLocation>
        <location evidence="3">Host cell junction</location>
        <location evidence="3">Host plasmodesma</location>
    </subcellularLocation>
</comment>
<comment type="alternative products">
    <event type="ribosomal frameshifting"/>
    <isoform>
        <id>P0CK04-1</id>
        <name>P3N-PIPO polyprotein</name>
        <sequence type="displayed"/>
    </isoform>
    <isoform>
        <id>Q84934-1</id>
        <name>Genome polyprotein</name>
        <sequence type="external"/>
    </isoform>
</comment>
<comment type="domain">
    <text evidence="1">The N-terminus of helper component proteinase is involved in interaction with stylets. The central part is involved in interaction with virions and the C-terminus is involved in cell-to cell movement of the virus (By similarity).</text>
</comment>
<comment type="PTM">
    <text evidence="1">Potyviral RNA is expressed as two polyproteins which undergo post-translational proteolytic processing. Genome polyprotein is processed by NIa-pro, P1 and HC-pro proteinases resulting in the production of at least ten individual proteins. P3N-PIPO is cleaved by P1 and HC-pro proteinases resulting in the production of three individual proteins. The P1 proteinase and the HC-pro cleave only their respective C-termini autocatalytically (By similarity).</text>
</comment>
<comment type="miscellaneous">
    <molecule>Isoform P3N-PIPO polyprotein</molecule>
    <text>Produced by -1 ribosomal frameshifting in P3 ORF.</text>
</comment>
<comment type="similarity">
    <text evidence="7">Belongs to the potyviridae P3N-PIPO polyprotein family.</text>
</comment>
<name>MVP_PPVSK</name>
<proteinExistence type="inferred from homology"/>
<accession>P0CK04</accession>